<keyword id="KW-0413">Isomerase</keyword>
<sequence length="233" mass="25544">MKEDPYLEVKRHLAREAAALVTSGMLLGLGSGSTSREFIKAVAERKKQENLDIRAVASSKESYSLASSLGIPLIDDEEFINTDLAVDGADEIDPQLRMIKGGGGAIFREKILLQSSQRRLILADESKSVKVLGKFGLPVEISPFGRSSIIATLENFGYLGNLRKNPRGGFFITNNGNYIYDIHTPNVYPHPEEDLLKLLQIHGIIEAGFVIENVEVWLGYTNGQIGKKNTGGL</sequence>
<proteinExistence type="inferred from homology"/>
<name>RPIA_CHLCV</name>
<feature type="chain" id="PRO_0000158405" description="Ribose-5-phosphate isomerase A">
    <location>
        <begin position="1"/>
        <end position="233"/>
    </location>
</feature>
<feature type="active site" description="Proton acceptor" evidence="1">
    <location>
        <position position="109"/>
    </location>
</feature>
<feature type="binding site" evidence="1">
    <location>
        <begin position="31"/>
        <end position="34"/>
    </location>
    <ligand>
        <name>substrate</name>
    </ligand>
</feature>
<feature type="binding site" evidence="1">
    <location>
        <begin position="87"/>
        <end position="90"/>
    </location>
    <ligand>
        <name>substrate</name>
    </ligand>
</feature>
<feature type="binding site" evidence="1">
    <location>
        <begin position="100"/>
        <end position="103"/>
    </location>
    <ligand>
        <name>substrate</name>
    </ligand>
</feature>
<feature type="binding site" evidence="1">
    <location>
        <position position="127"/>
    </location>
    <ligand>
        <name>substrate</name>
    </ligand>
</feature>
<comment type="function">
    <text evidence="1">Catalyzes the reversible conversion of ribose-5-phosphate to ribulose 5-phosphate.</text>
</comment>
<comment type="catalytic activity">
    <reaction evidence="1">
        <text>aldehydo-D-ribose 5-phosphate = D-ribulose 5-phosphate</text>
        <dbReference type="Rhea" id="RHEA:14657"/>
        <dbReference type="ChEBI" id="CHEBI:58121"/>
        <dbReference type="ChEBI" id="CHEBI:58273"/>
        <dbReference type="EC" id="5.3.1.6"/>
    </reaction>
</comment>
<comment type="pathway">
    <text evidence="1">Carbohydrate degradation; pentose phosphate pathway; D-ribose 5-phosphate from D-ribulose 5-phosphate (non-oxidative stage): step 1/1.</text>
</comment>
<comment type="subunit">
    <text evidence="1">Homodimer.</text>
</comment>
<comment type="similarity">
    <text evidence="1">Belongs to the ribose 5-phosphate isomerase family.</text>
</comment>
<organism>
    <name type="scientific">Chlamydia caviae (strain ATCC VR-813 / DSM 19441 / 03DC25 / GPIC)</name>
    <name type="common">Chlamydophila caviae</name>
    <dbReference type="NCBI Taxonomy" id="227941"/>
    <lineage>
        <taxon>Bacteria</taxon>
        <taxon>Pseudomonadati</taxon>
        <taxon>Chlamydiota</taxon>
        <taxon>Chlamydiia</taxon>
        <taxon>Chlamydiales</taxon>
        <taxon>Chlamydiaceae</taxon>
        <taxon>Chlamydia/Chlamydophila group</taxon>
        <taxon>Chlamydia</taxon>
    </lineage>
</organism>
<dbReference type="EC" id="5.3.1.6" evidence="1"/>
<dbReference type="EMBL" id="AE015925">
    <property type="protein sequence ID" value="AAP05374.1"/>
    <property type="molecule type" value="Genomic_DNA"/>
</dbReference>
<dbReference type="RefSeq" id="WP_011006589.1">
    <property type="nucleotide sequence ID" value="NC_003361.3"/>
</dbReference>
<dbReference type="SMR" id="Q822P7"/>
<dbReference type="STRING" id="227941.CCA_00632"/>
<dbReference type="KEGG" id="cca:CCA_00632"/>
<dbReference type="eggNOG" id="COG0120">
    <property type="taxonomic scope" value="Bacteria"/>
</dbReference>
<dbReference type="HOGENOM" id="CLU_056590_1_0_0"/>
<dbReference type="OrthoDB" id="5870696at2"/>
<dbReference type="UniPathway" id="UPA00115">
    <property type="reaction ID" value="UER00412"/>
</dbReference>
<dbReference type="Proteomes" id="UP000002193">
    <property type="component" value="Chromosome"/>
</dbReference>
<dbReference type="GO" id="GO:0005829">
    <property type="term" value="C:cytosol"/>
    <property type="evidence" value="ECO:0007669"/>
    <property type="project" value="TreeGrafter"/>
</dbReference>
<dbReference type="GO" id="GO:0004751">
    <property type="term" value="F:ribose-5-phosphate isomerase activity"/>
    <property type="evidence" value="ECO:0007669"/>
    <property type="project" value="UniProtKB-UniRule"/>
</dbReference>
<dbReference type="GO" id="GO:0006014">
    <property type="term" value="P:D-ribose metabolic process"/>
    <property type="evidence" value="ECO:0007669"/>
    <property type="project" value="TreeGrafter"/>
</dbReference>
<dbReference type="GO" id="GO:0009052">
    <property type="term" value="P:pentose-phosphate shunt, non-oxidative branch"/>
    <property type="evidence" value="ECO:0007669"/>
    <property type="project" value="UniProtKB-UniRule"/>
</dbReference>
<dbReference type="CDD" id="cd01398">
    <property type="entry name" value="RPI_A"/>
    <property type="match status" value="1"/>
</dbReference>
<dbReference type="FunFam" id="3.40.50.1360:FF:000001">
    <property type="entry name" value="Ribose-5-phosphate isomerase A"/>
    <property type="match status" value="1"/>
</dbReference>
<dbReference type="Gene3D" id="3.30.70.260">
    <property type="match status" value="1"/>
</dbReference>
<dbReference type="Gene3D" id="3.40.50.1360">
    <property type="match status" value="1"/>
</dbReference>
<dbReference type="HAMAP" id="MF_00170">
    <property type="entry name" value="Rib_5P_isom_A"/>
    <property type="match status" value="1"/>
</dbReference>
<dbReference type="InterPro" id="IPR037171">
    <property type="entry name" value="NagB/RpiA_transferase-like"/>
</dbReference>
<dbReference type="InterPro" id="IPR020672">
    <property type="entry name" value="Ribose5P_isomerase_typA_subgr"/>
</dbReference>
<dbReference type="InterPro" id="IPR004788">
    <property type="entry name" value="Ribose5P_isomerase_type_A"/>
</dbReference>
<dbReference type="NCBIfam" id="NF001924">
    <property type="entry name" value="PRK00702.1"/>
    <property type="match status" value="1"/>
</dbReference>
<dbReference type="NCBIfam" id="TIGR00021">
    <property type="entry name" value="rpiA"/>
    <property type="match status" value="1"/>
</dbReference>
<dbReference type="PANTHER" id="PTHR11934">
    <property type="entry name" value="RIBOSE-5-PHOSPHATE ISOMERASE"/>
    <property type="match status" value="1"/>
</dbReference>
<dbReference type="PANTHER" id="PTHR11934:SF0">
    <property type="entry name" value="RIBOSE-5-PHOSPHATE ISOMERASE"/>
    <property type="match status" value="1"/>
</dbReference>
<dbReference type="Pfam" id="PF06026">
    <property type="entry name" value="Rib_5-P_isom_A"/>
    <property type="match status" value="1"/>
</dbReference>
<dbReference type="SUPFAM" id="SSF75445">
    <property type="entry name" value="D-ribose-5-phosphate isomerase (RpiA), lid domain"/>
    <property type="match status" value="1"/>
</dbReference>
<dbReference type="SUPFAM" id="SSF100950">
    <property type="entry name" value="NagB/RpiA/CoA transferase-like"/>
    <property type="match status" value="1"/>
</dbReference>
<reference key="1">
    <citation type="journal article" date="2003" name="Nucleic Acids Res.">
        <title>Genome sequence of Chlamydophila caviae (Chlamydia psittaci GPIC): examining the role of niche-specific genes in the evolution of the Chlamydiaceae.</title>
        <authorList>
            <person name="Read T.D."/>
            <person name="Myers G.S.A."/>
            <person name="Brunham R.C."/>
            <person name="Nelson W.C."/>
            <person name="Paulsen I.T."/>
            <person name="Heidelberg J.F."/>
            <person name="Holtzapple E.K."/>
            <person name="Khouri H.M."/>
            <person name="Federova N.B."/>
            <person name="Carty H.A."/>
            <person name="Umayam L.A."/>
            <person name="Haft D.H."/>
            <person name="Peterson J.D."/>
            <person name="Beanan M.J."/>
            <person name="White O."/>
            <person name="Salzberg S.L."/>
            <person name="Hsia R.-C."/>
            <person name="McClarty G."/>
            <person name="Rank R.G."/>
            <person name="Bavoil P.M."/>
            <person name="Fraser C.M."/>
        </authorList>
    </citation>
    <scope>NUCLEOTIDE SEQUENCE [LARGE SCALE GENOMIC DNA]</scope>
    <source>
        <strain>ATCC VR-813 / DSM 19441 / 03DC25 / GPIC</strain>
    </source>
</reference>
<evidence type="ECO:0000255" key="1">
    <source>
        <dbReference type="HAMAP-Rule" id="MF_00170"/>
    </source>
</evidence>
<gene>
    <name evidence="1" type="primary">rpiA</name>
    <name type="ordered locus">CCA_00632</name>
</gene>
<accession>Q822P7</accession>
<protein>
    <recommendedName>
        <fullName evidence="1">Ribose-5-phosphate isomerase A</fullName>
        <ecNumber evidence="1">5.3.1.6</ecNumber>
    </recommendedName>
    <alternativeName>
        <fullName evidence="1">Phosphoriboisomerase A</fullName>
        <shortName evidence="1">PRI</shortName>
    </alternativeName>
</protein>